<organism>
    <name type="scientific">Vaccinia virus (strain Copenhagen)</name>
    <name type="common">VACV</name>
    <dbReference type="NCBI Taxonomy" id="10249"/>
    <lineage>
        <taxon>Viruses</taxon>
        <taxon>Varidnaviria</taxon>
        <taxon>Bamfordvirae</taxon>
        <taxon>Nucleocytoviricota</taxon>
        <taxon>Pokkesviricetes</taxon>
        <taxon>Chitovirales</taxon>
        <taxon>Poxviridae</taxon>
        <taxon>Chordopoxvirinae</taxon>
        <taxon>Orthopoxvirus</taxon>
        <taxon>Vaccinia virus</taxon>
    </lineage>
</organism>
<name>YVAN_VACCC</name>
<dbReference type="EMBL" id="M35027">
    <property type="protein sequence ID" value="AAA48166.1"/>
    <property type="molecule type" value="Genomic_DNA"/>
</dbReference>
<dbReference type="PIR" id="A42525">
    <property type="entry name" value="A42525"/>
</dbReference>
<dbReference type="Proteomes" id="UP000008269">
    <property type="component" value="Segment"/>
</dbReference>
<accession>P20523</accession>
<keyword id="KW-1185">Reference proteome</keyword>
<organismHost>
    <name type="scientific">Homo sapiens</name>
    <name type="common">Human</name>
    <dbReference type="NCBI Taxonomy" id="9606"/>
</organismHost>
<protein>
    <recommendedName>
        <fullName>Uncharacterized 7.9 kDa protein</fullName>
    </recommendedName>
</protein>
<proteinExistence type="predicted"/>
<reference key="1">
    <citation type="journal article" date="1990" name="Virology">
        <title>The complete DNA sequence of vaccinia virus.</title>
        <authorList>
            <person name="Goebel S.J."/>
            <person name="Johnson G.P."/>
            <person name="Perkus M.E."/>
            <person name="Davis S.W."/>
            <person name="Winslow J.P."/>
            <person name="Paoletti E."/>
        </authorList>
    </citation>
    <scope>NUCLEOTIDE SEQUENCE [LARGE SCALE GENOMIC DNA]</scope>
</reference>
<reference key="2">
    <citation type="journal article" date="1990" name="Virology">
        <title>Appendix to 'The complete DNA sequence of vaccinia virus'.</title>
        <authorList>
            <person name="Goebel S.J."/>
            <person name="Johnson G.P."/>
            <person name="Perkus M.E."/>
            <person name="Davis S.W."/>
            <person name="Winslow J.P."/>
            <person name="Paoletti E."/>
        </authorList>
    </citation>
    <scope>COMPLETE GENOME</scope>
</reference>
<gene>
    <name type="ORF">A ORF N</name>
</gene>
<feature type="chain" id="PRO_0000099657" description="Uncharacterized 7.9 kDa protein">
    <location>
        <begin position="1"/>
        <end position="70"/>
    </location>
</feature>
<sequence>MGKVRIFLPLTSLSIEITHPPTELIQSIIVDSLWGIRWYISLSFTTSTLKMLVRSTVSSICLLISSDIIF</sequence>